<protein>
    <recommendedName>
        <fullName>U4/U5/U6 small nuclear ribonucleoprotein prp3</fullName>
    </recommendedName>
    <alternativeName>
        <fullName>Pre-mRNA-splicing factor 3</fullName>
    </alternativeName>
</protein>
<feature type="chain" id="PRO_0000116420" description="U4/U5/U6 small nuclear ribonucleoprotein prp3">
    <location>
        <begin position="1"/>
        <end position="542"/>
    </location>
</feature>
<feature type="region of interest" description="Disordered" evidence="1">
    <location>
        <begin position="1"/>
        <end position="32"/>
    </location>
</feature>
<feature type="region of interest" description="Disordered" evidence="1">
    <location>
        <begin position="151"/>
        <end position="191"/>
    </location>
</feature>
<feature type="region of interest" description="Disordered" evidence="1">
    <location>
        <begin position="290"/>
        <end position="329"/>
    </location>
</feature>
<feature type="region of interest" description="Disordered" evidence="1">
    <location>
        <begin position="367"/>
        <end position="388"/>
    </location>
</feature>
<feature type="compositionally biased region" description="Low complexity" evidence="1">
    <location>
        <begin position="10"/>
        <end position="22"/>
    </location>
</feature>
<feature type="compositionally biased region" description="Basic and acidic residues" evidence="1">
    <location>
        <begin position="309"/>
        <end position="320"/>
    </location>
</feature>
<reference key="1">
    <citation type="journal article" date="2002" name="Nature">
        <title>The genome sequence of Schizosaccharomyces pombe.</title>
        <authorList>
            <person name="Wood V."/>
            <person name="Gwilliam R."/>
            <person name="Rajandream M.A."/>
            <person name="Lyne M.H."/>
            <person name="Lyne R."/>
            <person name="Stewart A."/>
            <person name="Sgouros J.G."/>
            <person name="Peat N."/>
            <person name="Hayles J."/>
            <person name="Baker S.G."/>
            <person name="Basham D."/>
            <person name="Bowman S."/>
            <person name="Brooks K."/>
            <person name="Brown D."/>
            <person name="Brown S."/>
            <person name="Chillingworth T."/>
            <person name="Churcher C.M."/>
            <person name="Collins M."/>
            <person name="Connor R."/>
            <person name="Cronin A."/>
            <person name="Davis P."/>
            <person name="Feltwell T."/>
            <person name="Fraser A."/>
            <person name="Gentles S."/>
            <person name="Goble A."/>
            <person name="Hamlin N."/>
            <person name="Harris D.E."/>
            <person name="Hidalgo J."/>
            <person name="Hodgson G."/>
            <person name="Holroyd S."/>
            <person name="Hornsby T."/>
            <person name="Howarth S."/>
            <person name="Huckle E.J."/>
            <person name="Hunt S."/>
            <person name="Jagels K."/>
            <person name="James K.D."/>
            <person name="Jones L."/>
            <person name="Jones M."/>
            <person name="Leather S."/>
            <person name="McDonald S."/>
            <person name="McLean J."/>
            <person name="Mooney P."/>
            <person name="Moule S."/>
            <person name="Mungall K.L."/>
            <person name="Murphy L.D."/>
            <person name="Niblett D."/>
            <person name="Odell C."/>
            <person name="Oliver K."/>
            <person name="O'Neil S."/>
            <person name="Pearson D."/>
            <person name="Quail M.A."/>
            <person name="Rabbinowitsch E."/>
            <person name="Rutherford K.M."/>
            <person name="Rutter S."/>
            <person name="Saunders D."/>
            <person name="Seeger K."/>
            <person name="Sharp S."/>
            <person name="Skelton J."/>
            <person name="Simmonds M.N."/>
            <person name="Squares R."/>
            <person name="Squares S."/>
            <person name="Stevens K."/>
            <person name="Taylor K."/>
            <person name="Taylor R.G."/>
            <person name="Tivey A."/>
            <person name="Walsh S.V."/>
            <person name="Warren T."/>
            <person name="Whitehead S."/>
            <person name="Woodward J.R."/>
            <person name="Volckaert G."/>
            <person name="Aert R."/>
            <person name="Robben J."/>
            <person name="Grymonprez B."/>
            <person name="Weltjens I."/>
            <person name="Vanstreels E."/>
            <person name="Rieger M."/>
            <person name="Schaefer M."/>
            <person name="Mueller-Auer S."/>
            <person name="Gabel C."/>
            <person name="Fuchs M."/>
            <person name="Duesterhoeft A."/>
            <person name="Fritzc C."/>
            <person name="Holzer E."/>
            <person name="Moestl D."/>
            <person name="Hilbert H."/>
            <person name="Borzym K."/>
            <person name="Langer I."/>
            <person name="Beck A."/>
            <person name="Lehrach H."/>
            <person name="Reinhardt R."/>
            <person name="Pohl T.M."/>
            <person name="Eger P."/>
            <person name="Zimmermann W."/>
            <person name="Wedler H."/>
            <person name="Wambutt R."/>
            <person name="Purnelle B."/>
            <person name="Goffeau A."/>
            <person name="Cadieu E."/>
            <person name="Dreano S."/>
            <person name="Gloux S."/>
            <person name="Lelaure V."/>
            <person name="Mottier S."/>
            <person name="Galibert F."/>
            <person name="Aves S.J."/>
            <person name="Xiang Z."/>
            <person name="Hunt C."/>
            <person name="Moore K."/>
            <person name="Hurst S.M."/>
            <person name="Lucas M."/>
            <person name="Rochet M."/>
            <person name="Gaillardin C."/>
            <person name="Tallada V.A."/>
            <person name="Garzon A."/>
            <person name="Thode G."/>
            <person name="Daga R.R."/>
            <person name="Cruzado L."/>
            <person name="Jimenez J."/>
            <person name="Sanchez M."/>
            <person name="del Rey F."/>
            <person name="Benito J."/>
            <person name="Dominguez A."/>
            <person name="Revuelta J.L."/>
            <person name="Moreno S."/>
            <person name="Armstrong J."/>
            <person name="Forsburg S.L."/>
            <person name="Cerutti L."/>
            <person name="Lowe T."/>
            <person name="McCombie W.R."/>
            <person name="Paulsen I."/>
            <person name="Potashkin J."/>
            <person name="Shpakovski G.V."/>
            <person name="Ussery D."/>
            <person name="Barrell B.G."/>
            <person name="Nurse P."/>
        </authorList>
    </citation>
    <scope>NUCLEOTIDE SEQUENCE [LARGE SCALE GENOMIC DNA]</scope>
    <source>
        <strain>972 / ATCC 24843</strain>
    </source>
</reference>
<reference key="2">
    <citation type="journal article" date="2005" name="Eukaryot. Cell">
        <title>Dim1p is required for efficient splicing and export of mRNA encoding lid1p, a component of the fission yeast anaphase-promoting complex.</title>
        <authorList>
            <person name="Carnahan R.H."/>
            <person name="Feoktistova A."/>
            <person name="Ren L."/>
            <person name="Niessen S."/>
            <person name="Yates J.R. III"/>
            <person name="Gould K.L."/>
        </authorList>
    </citation>
    <scope>IDENTIFICATION BY MASS SPECTROMETRY</scope>
    <scope>IDENTIFICATION IN THE U4/U5/U6 TRI-SNRNP COMPLEX</scope>
</reference>
<reference key="3">
    <citation type="journal article" date="2006" name="Nat. Biotechnol.">
        <title>ORFeome cloning and global analysis of protein localization in the fission yeast Schizosaccharomyces pombe.</title>
        <authorList>
            <person name="Matsuyama A."/>
            <person name="Arai R."/>
            <person name="Yashiroda Y."/>
            <person name="Shirai A."/>
            <person name="Kamata A."/>
            <person name="Sekido S."/>
            <person name="Kobayashi Y."/>
            <person name="Hashimoto A."/>
            <person name="Hamamoto M."/>
            <person name="Hiraoka Y."/>
            <person name="Horinouchi S."/>
            <person name="Yoshida M."/>
        </authorList>
    </citation>
    <scope>SUBCELLULAR LOCATION [LARGE SCALE ANALYSIS]</scope>
</reference>
<reference key="4">
    <citation type="journal article" date="2011" name="PLoS ONE">
        <title>Systematic two-hybrid and comparative proteomic analyses reveal novel yeast pre-mRNA splicing factors connected to Prp19.</title>
        <authorList>
            <person name="Ren L."/>
            <person name="McLean J.R."/>
            <person name="Hazbun T.R."/>
            <person name="Fields S."/>
            <person name="Vander Kooi C."/>
            <person name="Ohi M.D."/>
            <person name="Gould K.L."/>
        </authorList>
    </citation>
    <scope>IDENTIFICATION BY MASS SPECTROMETRY</scope>
    <scope>IDENTIFICATION IN THE U4/U5/U6 TRI-SNRNP COMPLEX</scope>
</reference>
<reference key="5">
    <citation type="journal article" date="2012" name="Biochem. Biophys. Res. Commun.">
        <title>Characterization of the ptr5+ gene involved in nuclear mRNA export in fission yeast.</title>
        <authorList>
            <person name="Watanabe N."/>
            <person name="Ikeda T."/>
            <person name="Mizuki F."/>
            <person name="Tani T."/>
        </authorList>
    </citation>
    <scope>FUNCTION</scope>
</reference>
<comment type="function">
    <text evidence="5">Participates in pre-mRNA splicing and in nuclear mRNA export. May play a role in the assembly of the U4/U5/U6 tri-snRNP complex.</text>
</comment>
<comment type="subunit">
    <text evidence="2 4">Component of the U4/U5/U6 tri-snRNP complex.</text>
</comment>
<comment type="subcellular location">
    <subcellularLocation>
        <location evidence="3">Nucleus</location>
    </subcellularLocation>
    <subcellularLocation>
        <location evidence="3">Cytoplasm</location>
        <location evidence="3">Cytoskeleton</location>
        <location evidence="3">Spindle</location>
    </subcellularLocation>
    <subcellularLocation>
        <location evidence="3">Cytoplasm</location>
        <location evidence="3">Cytoskeleton</location>
        <location evidence="3">Spindle pole</location>
    </subcellularLocation>
</comment>
<accession>Q09856</accession>
<proteinExistence type="evidence at protein level"/>
<keyword id="KW-0963">Cytoplasm</keyword>
<keyword id="KW-0206">Cytoskeleton</keyword>
<keyword id="KW-0507">mRNA processing</keyword>
<keyword id="KW-0508">mRNA splicing</keyword>
<keyword id="KW-0509">mRNA transport</keyword>
<keyword id="KW-0539">Nucleus</keyword>
<keyword id="KW-1185">Reference proteome</keyword>
<keyword id="KW-0747">Spliceosome</keyword>
<keyword id="KW-0813">Transport</keyword>
<sequence length="542" mass="62589">MDRNKRRLESSQLRESSSPNSQNKPNAMEEIKRRRLQLEQRLAQQAQVPWEKRSENGNNAGMETIQNRISELKEKTAKRFNANIPKSEGLFRDDSNGAKGGLKVGIHPVLLDGNIQNTILTPENRKRTASFSTKGVSLSQHQLLKPPAITEQNPFLDTAPTPRLEDSPFYDPRTKESRKTRGSRNLHLNESGKFIEEANQARRQARLEDLKKRIALHSHKAGIEDELDITSKSIGRDTIPNIEWWDLPFIKDYNDYGDENNWLIDGPQSIINSAIQHPIPVLPPYAKNQPSSHSVFLTKKEQKKIRRQTRAEARKEKQDRQLLGIEPPEPPKVKLSNLMHVLGDDAIKDPTKIEAEVRKQVEERRLRHERENEERKLTPEERKEKAFRKKDEDSAAGLRCLVFRIKYLAHRPHRLKIDLNAKQWGATGVCILNANFNLVIFEAGQKAIKKLKRLMLERIDWTDTSRNSIIAQGNKLVDTEGRELNYTENTCNLVWEGEIGRRAFRYWSFRSCPSENDAKSYLEEQGGAEHFWMLAKSWSENV</sequence>
<organism>
    <name type="scientific">Schizosaccharomyces pombe (strain 972 / ATCC 24843)</name>
    <name type="common">Fission yeast</name>
    <dbReference type="NCBI Taxonomy" id="284812"/>
    <lineage>
        <taxon>Eukaryota</taxon>
        <taxon>Fungi</taxon>
        <taxon>Dikarya</taxon>
        <taxon>Ascomycota</taxon>
        <taxon>Taphrinomycotina</taxon>
        <taxon>Schizosaccharomycetes</taxon>
        <taxon>Schizosaccharomycetales</taxon>
        <taxon>Schizosaccharomycetaceae</taxon>
        <taxon>Schizosaccharomyces</taxon>
    </lineage>
</organism>
<evidence type="ECO:0000256" key="1">
    <source>
        <dbReference type="SAM" id="MobiDB-lite"/>
    </source>
</evidence>
<evidence type="ECO:0000269" key="2">
    <source>
    </source>
</evidence>
<evidence type="ECO:0000269" key="3">
    <source>
    </source>
</evidence>
<evidence type="ECO:0000269" key="4">
    <source>
    </source>
</evidence>
<evidence type="ECO:0000269" key="5">
    <source>
    </source>
</evidence>
<gene>
    <name type="primary">prp3</name>
    <name type="ORF">SPAC29E6.02</name>
    <name type="ORF">SPAC30.06</name>
</gene>
<dbReference type="EMBL" id="Z66525">
    <property type="protein sequence ID" value="CAA91424.1"/>
    <property type="molecule type" value="Genomic_DNA"/>
</dbReference>
<dbReference type="EMBL" id="CU329670">
    <property type="protein sequence ID" value="CAB66465.1"/>
    <property type="molecule type" value="Genomic_DNA"/>
</dbReference>
<dbReference type="PIR" id="S62508">
    <property type="entry name" value="S62508"/>
</dbReference>
<dbReference type="RefSeq" id="NP_594560.1">
    <property type="nucleotide sequence ID" value="NM_001019989.2"/>
</dbReference>
<dbReference type="SMR" id="Q09856"/>
<dbReference type="BioGRID" id="278182">
    <property type="interactions" value="10"/>
</dbReference>
<dbReference type="FunCoup" id="Q09856">
    <property type="interactions" value="649"/>
</dbReference>
<dbReference type="STRING" id="284812.Q09856"/>
<dbReference type="iPTMnet" id="Q09856"/>
<dbReference type="PaxDb" id="4896-SPAC29E6.02.1"/>
<dbReference type="EnsemblFungi" id="SPAC29E6.02.1">
    <property type="protein sequence ID" value="SPAC29E6.02.1:pep"/>
    <property type="gene ID" value="SPAC29E6.02"/>
</dbReference>
<dbReference type="GeneID" id="2541686"/>
<dbReference type="KEGG" id="spo:2541686"/>
<dbReference type="PomBase" id="SPAC29E6.02">
    <property type="gene designation" value="prp3"/>
</dbReference>
<dbReference type="VEuPathDB" id="FungiDB:SPAC29E6.02"/>
<dbReference type="eggNOG" id="KOG2769">
    <property type="taxonomic scope" value="Eukaryota"/>
</dbReference>
<dbReference type="HOGENOM" id="CLU_015750_2_2_1"/>
<dbReference type="InParanoid" id="Q09856"/>
<dbReference type="OMA" id="CVMHPRF"/>
<dbReference type="PhylomeDB" id="Q09856"/>
<dbReference type="PRO" id="PR:Q09856"/>
<dbReference type="Proteomes" id="UP000002485">
    <property type="component" value="Chromosome I"/>
</dbReference>
<dbReference type="GO" id="GO:0005737">
    <property type="term" value="C:cytoplasm"/>
    <property type="evidence" value="ECO:0007669"/>
    <property type="project" value="UniProtKB-KW"/>
</dbReference>
<dbReference type="GO" id="GO:0072686">
    <property type="term" value="C:mitotic spindle"/>
    <property type="evidence" value="ECO:0007005"/>
    <property type="project" value="PomBase"/>
</dbReference>
<dbReference type="GO" id="GO:0005634">
    <property type="term" value="C:nucleus"/>
    <property type="evidence" value="ECO:0007005"/>
    <property type="project" value="PomBase"/>
</dbReference>
<dbReference type="GO" id="GO:0000922">
    <property type="term" value="C:spindle pole"/>
    <property type="evidence" value="ECO:0007669"/>
    <property type="project" value="UniProtKB-SubCell"/>
</dbReference>
<dbReference type="GO" id="GO:0005681">
    <property type="term" value="C:spliceosomal complex"/>
    <property type="evidence" value="ECO:0007669"/>
    <property type="project" value="UniProtKB-KW"/>
</dbReference>
<dbReference type="GO" id="GO:0046540">
    <property type="term" value="C:U4/U6 x U5 tri-snRNP complex"/>
    <property type="evidence" value="ECO:0000314"/>
    <property type="project" value="PomBase"/>
</dbReference>
<dbReference type="GO" id="GO:0045292">
    <property type="term" value="P:mRNA cis splicing, via spliceosome"/>
    <property type="evidence" value="ECO:0000315"/>
    <property type="project" value="PomBase"/>
</dbReference>
<dbReference type="GO" id="GO:0000398">
    <property type="term" value="P:mRNA splicing, via spliceosome"/>
    <property type="evidence" value="ECO:0000318"/>
    <property type="project" value="GO_Central"/>
</dbReference>
<dbReference type="GO" id="GO:0051028">
    <property type="term" value="P:mRNA transport"/>
    <property type="evidence" value="ECO:0007669"/>
    <property type="project" value="UniProtKB-KW"/>
</dbReference>
<dbReference type="CDD" id="cd24162">
    <property type="entry name" value="Prp3_C"/>
    <property type="match status" value="1"/>
</dbReference>
<dbReference type="InterPro" id="IPR013881">
    <property type="entry name" value="Pre-mRNA_splic_Prp3_dom"/>
</dbReference>
<dbReference type="InterPro" id="IPR027104">
    <property type="entry name" value="Prp3"/>
</dbReference>
<dbReference type="InterPro" id="IPR010541">
    <property type="entry name" value="Prp3_C"/>
</dbReference>
<dbReference type="PANTHER" id="PTHR14212">
    <property type="entry name" value="U4/U6-ASSOCIATED RNA SPLICING FACTOR-RELATED"/>
    <property type="match status" value="1"/>
</dbReference>
<dbReference type="PANTHER" id="PTHR14212:SF0">
    <property type="entry name" value="U4_U6 SMALL NUCLEAR RIBONUCLEOPROTEIN PRP3"/>
    <property type="match status" value="1"/>
</dbReference>
<dbReference type="Pfam" id="PF08572">
    <property type="entry name" value="PRP3"/>
    <property type="match status" value="1"/>
</dbReference>
<dbReference type="Pfam" id="PF06544">
    <property type="entry name" value="Prp3_C"/>
    <property type="match status" value="1"/>
</dbReference>
<name>PRP3_SCHPO</name>